<protein>
    <recommendedName>
        <fullName evidence="1">Lactate utilization protein B</fullName>
    </recommendedName>
</protein>
<sequence>MSMKISEKKFNDRVGDGIQDSFMRGAVSSAQTRLYTNRLKAADELGNWEEWRELGEEIRQHTLENLDYYLMQLSENVSKRGGHVYFAKTKEEAAKYIQDVAKKKQAKKVVKSKSMVTEEISMNHALEEIGCEVLESDLGEYILQVDNDPPSHIIAPALHKNRTQIRDVFKEKLGYENSDDPYEMTKFVRKQLREKFMDAEIGVTGCNFAVANTGSLCLVTNEGNADLVMSIPKTQIAVMGMERMVPTMEELDVLVGLLCRSAVGQKLTSYVTVAGPIQEEEVDGPEEFHLVVVDNGRSQILGSEFRQVLQCIRCAACVNVCPVYRHVGGHSYGSIYSGPIGAVLTPLLGGYDDYKELPYASSLCGACTEACPVKIPLHDLLLKHRQVIVEQEGRAPLAEKLAMKMFSMGASSAALYKMGSKMAPAAMSPFTSGNRVSKGVGPLKNWTDIREFPAPSKERFRDWYKDHKKGGDK</sequence>
<feature type="chain" id="PRO_0000383961" description="Lactate utilization protein B">
    <location>
        <begin position="1"/>
        <end position="473"/>
    </location>
</feature>
<feature type="domain" description="4Fe-4S ferredoxin-type 1" evidence="1">
    <location>
        <begin position="302"/>
        <end position="332"/>
    </location>
</feature>
<feature type="domain" description="4Fe-4S ferredoxin-type 2" evidence="1">
    <location>
        <begin position="351"/>
        <end position="380"/>
    </location>
</feature>
<feature type="binding site" evidence="1">
    <location>
        <position position="311"/>
    </location>
    <ligand>
        <name>[4Fe-4S] cluster</name>
        <dbReference type="ChEBI" id="CHEBI:49883"/>
        <label>1</label>
    </ligand>
</feature>
<feature type="binding site" evidence="1">
    <location>
        <position position="314"/>
    </location>
    <ligand>
        <name>[4Fe-4S] cluster</name>
        <dbReference type="ChEBI" id="CHEBI:49883"/>
        <label>1</label>
    </ligand>
</feature>
<feature type="binding site" evidence="1">
    <location>
        <position position="317"/>
    </location>
    <ligand>
        <name>[4Fe-4S] cluster</name>
        <dbReference type="ChEBI" id="CHEBI:49883"/>
        <label>1</label>
    </ligand>
</feature>
<feature type="binding site" evidence="1">
    <location>
        <position position="321"/>
    </location>
    <ligand>
        <name>[4Fe-4S] cluster</name>
        <dbReference type="ChEBI" id="CHEBI:49883"/>
        <label>2</label>
    </ligand>
</feature>
<feature type="binding site" evidence="1">
    <location>
        <position position="364"/>
    </location>
    <ligand>
        <name>[4Fe-4S] cluster</name>
        <dbReference type="ChEBI" id="CHEBI:49883"/>
        <label>2</label>
    </ligand>
</feature>
<feature type="binding site" evidence="1">
    <location>
        <position position="367"/>
    </location>
    <ligand>
        <name>[4Fe-4S] cluster</name>
        <dbReference type="ChEBI" id="CHEBI:49883"/>
        <label>2</label>
    </ligand>
</feature>
<feature type="binding site" evidence="1">
    <location>
        <position position="371"/>
    </location>
    <ligand>
        <name>[4Fe-4S] cluster</name>
        <dbReference type="ChEBI" id="CHEBI:49883"/>
        <label>1</label>
    </ligand>
</feature>
<organism>
    <name type="scientific">Bacillus thuringiensis (strain Al Hakam)</name>
    <dbReference type="NCBI Taxonomy" id="412694"/>
    <lineage>
        <taxon>Bacteria</taxon>
        <taxon>Bacillati</taxon>
        <taxon>Bacillota</taxon>
        <taxon>Bacilli</taxon>
        <taxon>Bacillales</taxon>
        <taxon>Bacillaceae</taxon>
        <taxon>Bacillus</taxon>
        <taxon>Bacillus cereus group</taxon>
    </lineage>
</organism>
<evidence type="ECO:0000255" key="1">
    <source>
        <dbReference type="HAMAP-Rule" id="MF_02103"/>
    </source>
</evidence>
<comment type="function">
    <text evidence="1">Is involved in L-lactate degradation and allows cells to grow with lactate as the sole carbon source. Has probably a role as an electron transporter during oxidation of L-lactate.</text>
</comment>
<comment type="similarity">
    <text evidence="1">Belongs to the LutB/YkgF family.</text>
</comment>
<accession>A0RBC8</accession>
<keyword id="KW-0004">4Fe-4S</keyword>
<keyword id="KW-0249">Electron transport</keyword>
<keyword id="KW-0408">Iron</keyword>
<keyword id="KW-0411">Iron-sulfur</keyword>
<keyword id="KW-0479">Metal-binding</keyword>
<keyword id="KW-0677">Repeat</keyword>
<keyword id="KW-0813">Transport</keyword>
<name>LUTB_BACAH</name>
<dbReference type="EMBL" id="CP000485">
    <property type="protein sequence ID" value="ABK84521.1"/>
    <property type="molecule type" value="Genomic_DNA"/>
</dbReference>
<dbReference type="RefSeq" id="WP_000061914.1">
    <property type="nucleotide sequence ID" value="NC_008600.1"/>
</dbReference>
<dbReference type="KEGG" id="btl:BALH_1166"/>
<dbReference type="HOGENOM" id="CLU_027059_2_0_9"/>
<dbReference type="GO" id="GO:0051539">
    <property type="term" value="F:4 iron, 4 sulfur cluster binding"/>
    <property type="evidence" value="ECO:0007669"/>
    <property type="project" value="UniProtKB-KW"/>
</dbReference>
<dbReference type="GO" id="GO:0046872">
    <property type="term" value="F:metal ion binding"/>
    <property type="evidence" value="ECO:0007669"/>
    <property type="project" value="UniProtKB-KW"/>
</dbReference>
<dbReference type="GO" id="GO:0006089">
    <property type="term" value="P:lactate metabolic process"/>
    <property type="evidence" value="ECO:0007669"/>
    <property type="project" value="UniProtKB-UniRule"/>
</dbReference>
<dbReference type="Gene3D" id="1.10.1060.10">
    <property type="entry name" value="Alpha-helical ferredoxin"/>
    <property type="match status" value="1"/>
</dbReference>
<dbReference type="Gene3D" id="3.40.50.10420">
    <property type="entry name" value="NagB/RpiA/CoA transferase-like"/>
    <property type="match status" value="1"/>
</dbReference>
<dbReference type="HAMAP" id="MF_02103">
    <property type="entry name" value="LutB"/>
    <property type="match status" value="1"/>
</dbReference>
<dbReference type="InterPro" id="IPR017896">
    <property type="entry name" value="4Fe4S_Fe-S-bd"/>
</dbReference>
<dbReference type="InterPro" id="IPR017900">
    <property type="entry name" value="4Fe4S_Fe_S_CS"/>
</dbReference>
<dbReference type="InterPro" id="IPR024185">
    <property type="entry name" value="FTHF_cligase-like_sf"/>
</dbReference>
<dbReference type="InterPro" id="IPR009051">
    <property type="entry name" value="Helical_ferredxn"/>
</dbReference>
<dbReference type="InterPro" id="IPR003741">
    <property type="entry name" value="LUD_dom"/>
</dbReference>
<dbReference type="InterPro" id="IPR022825">
    <property type="entry name" value="LutB"/>
</dbReference>
<dbReference type="InterPro" id="IPR004452">
    <property type="entry name" value="LutB/LldF"/>
</dbReference>
<dbReference type="InterPro" id="IPR024569">
    <property type="entry name" value="LutB_C"/>
</dbReference>
<dbReference type="InterPro" id="IPR037171">
    <property type="entry name" value="NagB/RpiA_transferase-like"/>
</dbReference>
<dbReference type="NCBIfam" id="TIGR00273">
    <property type="entry name" value="LutB/LldF family L-lactate oxidation iron-sulfur protein"/>
    <property type="match status" value="1"/>
</dbReference>
<dbReference type="PANTHER" id="PTHR47153">
    <property type="entry name" value="LACTATE UTILIZATION PROTEIN B"/>
    <property type="match status" value="1"/>
</dbReference>
<dbReference type="PANTHER" id="PTHR47153:SF2">
    <property type="entry name" value="LACTATE UTILIZATION PROTEIN B"/>
    <property type="match status" value="1"/>
</dbReference>
<dbReference type="Pfam" id="PF13183">
    <property type="entry name" value="Fer4_8"/>
    <property type="match status" value="1"/>
</dbReference>
<dbReference type="Pfam" id="PF02589">
    <property type="entry name" value="LUD_dom"/>
    <property type="match status" value="1"/>
</dbReference>
<dbReference type="Pfam" id="PF11870">
    <property type="entry name" value="LutB_C"/>
    <property type="match status" value="1"/>
</dbReference>
<dbReference type="SUPFAM" id="SSF46548">
    <property type="entry name" value="alpha-helical ferredoxin"/>
    <property type="match status" value="1"/>
</dbReference>
<dbReference type="SUPFAM" id="SSF100950">
    <property type="entry name" value="NagB/RpiA/CoA transferase-like"/>
    <property type="match status" value="1"/>
</dbReference>
<dbReference type="PROSITE" id="PS00198">
    <property type="entry name" value="4FE4S_FER_1"/>
    <property type="match status" value="1"/>
</dbReference>
<reference key="1">
    <citation type="journal article" date="2007" name="J. Bacteriol.">
        <title>The complete genome sequence of Bacillus thuringiensis Al Hakam.</title>
        <authorList>
            <person name="Challacombe J.F."/>
            <person name="Altherr M.R."/>
            <person name="Xie G."/>
            <person name="Bhotika S.S."/>
            <person name="Brown N."/>
            <person name="Bruce D."/>
            <person name="Campbell C.S."/>
            <person name="Campbell M.L."/>
            <person name="Chen J."/>
            <person name="Chertkov O."/>
            <person name="Cleland C."/>
            <person name="Dimitrijevic M."/>
            <person name="Doggett N.A."/>
            <person name="Fawcett J.J."/>
            <person name="Glavina T."/>
            <person name="Goodwin L.A."/>
            <person name="Green L.D."/>
            <person name="Han C.S."/>
            <person name="Hill K.K."/>
            <person name="Hitchcock P."/>
            <person name="Jackson P.J."/>
            <person name="Keim P."/>
            <person name="Kewalramani A.R."/>
            <person name="Longmire J."/>
            <person name="Lucas S."/>
            <person name="Malfatti S."/>
            <person name="Martinez D."/>
            <person name="McMurry K."/>
            <person name="Meincke L.J."/>
            <person name="Misra M."/>
            <person name="Moseman B.L."/>
            <person name="Mundt M."/>
            <person name="Munk A.C."/>
            <person name="Okinaka R.T."/>
            <person name="Parson-Quintana B."/>
            <person name="Reilly L.P."/>
            <person name="Richardson P."/>
            <person name="Robinson D.L."/>
            <person name="Saunders E."/>
            <person name="Tapia R."/>
            <person name="Tesmer J.G."/>
            <person name="Thayer N."/>
            <person name="Thompson L.S."/>
            <person name="Tice H."/>
            <person name="Ticknor L.O."/>
            <person name="Wills P.L."/>
            <person name="Gilna P."/>
            <person name="Brettin T.S."/>
        </authorList>
    </citation>
    <scope>NUCLEOTIDE SEQUENCE [LARGE SCALE GENOMIC DNA]</scope>
    <source>
        <strain>Al Hakam</strain>
    </source>
</reference>
<gene>
    <name evidence="1" type="primary">lutB</name>
    <name type="ordered locus">BALH_1166</name>
</gene>
<proteinExistence type="inferred from homology"/>